<dbReference type="EC" id="5.4.2.-" evidence="1"/>
<dbReference type="EMBL" id="BX571860">
    <property type="protein sequence ID" value="CAE12854.1"/>
    <property type="molecule type" value="Genomic_DNA"/>
</dbReference>
<dbReference type="RefSeq" id="WP_011144941.1">
    <property type="nucleotide sequence ID" value="NC_005126.1"/>
</dbReference>
<dbReference type="SMR" id="Q7N900"/>
<dbReference type="STRING" id="243265.plu0559"/>
<dbReference type="GeneID" id="48846845"/>
<dbReference type="KEGG" id="plu:plu0559"/>
<dbReference type="eggNOG" id="COG0406">
    <property type="taxonomic scope" value="Bacteria"/>
</dbReference>
<dbReference type="HOGENOM" id="CLU_033323_9_5_6"/>
<dbReference type="OrthoDB" id="9783269at2"/>
<dbReference type="UniPathway" id="UPA00109">
    <property type="reaction ID" value="UER00186"/>
</dbReference>
<dbReference type="Proteomes" id="UP000002514">
    <property type="component" value="Chromosome"/>
</dbReference>
<dbReference type="GO" id="GO:0005737">
    <property type="term" value="C:cytoplasm"/>
    <property type="evidence" value="ECO:0007669"/>
    <property type="project" value="TreeGrafter"/>
</dbReference>
<dbReference type="GO" id="GO:0016791">
    <property type="term" value="F:phosphatase activity"/>
    <property type="evidence" value="ECO:0007669"/>
    <property type="project" value="TreeGrafter"/>
</dbReference>
<dbReference type="GO" id="GO:0004619">
    <property type="term" value="F:phosphoglycerate mutase activity"/>
    <property type="evidence" value="ECO:0007669"/>
    <property type="project" value="UniProtKB-UniRule"/>
</dbReference>
<dbReference type="GO" id="GO:0006096">
    <property type="term" value="P:glycolytic process"/>
    <property type="evidence" value="ECO:0007669"/>
    <property type="project" value="UniProtKB-UniRule"/>
</dbReference>
<dbReference type="CDD" id="cd07067">
    <property type="entry name" value="HP_PGM_like"/>
    <property type="match status" value="1"/>
</dbReference>
<dbReference type="Gene3D" id="3.40.50.1240">
    <property type="entry name" value="Phosphoglycerate mutase-like"/>
    <property type="match status" value="1"/>
</dbReference>
<dbReference type="HAMAP" id="MF_01040">
    <property type="entry name" value="PGAM_GpmB"/>
    <property type="match status" value="1"/>
</dbReference>
<dbReference type="InterPro" id="IPR013078">
    <property type="entry name" value="His_Pase_superF_clade-1"/>
</dbReference>
<dbReference type="InterPro" id="IPR029033">
    <property type="entry name" value="His_PPase_superfam"/>
</dbReference>
<dbReference type="InterPro" id="IPR001345">
    <property type="entry name" value="PG/BPGM_mutase_AS"/>
</dbReference>
<dbReference type="InterPro" id="IPR050275">
    <property type="entry name" value="PGM_Phosphatase"/>
</dbReference>
<dbReference type="InterPro" id="IPR023086">
    <property type="entry name" value="Phosphoglycerate_mutase_GpmB"/>
</dbReference>
<dbReference type="NCBIfam" id="NF002901">
    <property type="entry name" value="PRK03482.1"/>
    <property type="match status" value="1"/>
</dbReference>
<dbReference type="PANTHER" id="PTHR48100">
    <property type="entry name" value="BROAD-SPECIFICITY PHOSPHATASE YOR283W-RELATED"/>
    <property type="match status" value="1"/>
</dbReference>
<dbReference type="PANTHER" id="PTHR48100:SF1">
    <property type="entry name" value="HISTIDINE PHOSPHATASE FAMILY PROTEIN-RELATED"/>
    <property type="match status" value="1"/>
</dbReference>
<dbReference type="Pfam" id="PF00300">
    <property type="entry name" value="His_Phos_1"/>
    <property type="match status" value="1"/>
</dbReference>
<dbReference type="SMART" id="SM00855">
    <property type="entry name" value="PGAM"/>
    <property type="match status" value="1"/>
</dbReference>
<dbReference type="SUPFAM" id="SSF53254">
    <property type="entry name" value="Phosphoglycerate mutase-like"/>
    <property type="match status" value="1"/>
</dbReference>
<dbReference type="PROSITE" id="PS00175">
    <property type="entry name" value="PG_MUTASE"/>
    <property type="match status" value="1"/>
</dbReference>
<gene>
    <name evidence="1" type="primary">gpmB</name>
    <name type="ordered locus">plu0559</name>
</gene>
<reference key="1">
    <citation type="journal article" date="2003" name="Nat. Biotechnol.">
        <title>The genome sequence of the entomopathogenic bacterium Photorhabdus luminescens.</title>
        <authorList>
            <person name="Duchaud E."/>
            <person name="Rusniok C."/>
            <person name="Frangeul L."/>
            <person name="Buchrieser C."/>
            <person name="Givaudan A."/>
            <person name="Taourit S."/>
            <person name="Bocs S."/>
            <person name="Boursaux-Eude C."/>
            <person name="Chandler M."/>
            <person name="Charles J.-F."/>
            <person name="Dassa E."/>
            <person name="Derose R."/>
            <person name="Derzelle S."/>
            <person name="Freyssinet G."/>
            <person name="Gaudriault S."/>
            <person name="Medigue C."/>
            <person name="Lanois A."/>
            <person name="Powell K."/>
            <person name="Siguier P."/>
            <person name="Vincent R."/>
            <person name="Wingate V."/>
            <person name="Zouine M."/>
            <person name="Glaser P."/>
            <person name="Boemare N."/>
            <person name="Danchin A."/>
            <person name="Kunst F."/>
        </authorList>
    </citation>
    <scope>NUCLEOTIDE SEQUENCE [LARGE SCALE GENOMIC DNA]</scope>
    <source>
        <strain>DSM 15139 / CIP 105565 / TT01</strain>
    </source>
</reference>
<keyword id="KW-0324">Glycolysis</keyword>
<keyword id="KW-0413">Isomerase</keyword>
<keyword id="KW-1185">Reference proteome</keyword>
<name>GPMB_PHOLL</name>
<feature type="chain" id="PRO_0000179949" description="Probable phosphoglycerate mutase GpmB">
    <location>
        <begin position="1"/>
        <end position="215"/>
    </location>
</feature>
<feature type="active site" description="Tele-phosphohistidine intermediate" evidence="1">
    <location>
        <position position="9"/>
    </location>
</feature>
<feature type="active site" description="Proton donor/acceptor" evidence="1">
    <location>
        <position position="82"/>
    </location>
</feature>
<feature type="binding site" evidence="1">
    <location>
        <begin position="8"/>
        <end position="15"/>
    </location>
    <ligand>
        <name>substrate</name>
    </ligand>
</feature>
<feature type="binding site" evidence="1">
    <location>
        <begin position="21"/>
        <end position="22"/>
    </location>
    <ligand>
        <name>substrate</name>
    </ligand>
</feature>
<feature type="binding site" evidence="1">
    <location>
        <position position="58"/>
    </location>
    <ligand>
        <name>substrate</name>
    </ligand>
</feature>
<feature type="binding site" evidence="1">
    <location>
        <position position="60"/>
    </location>
    <ligand>
        <name>substrate</name>
    </ligand>
</feature>
<feature type="binding site" evidence="1">
    <location>
        <begin position="82"/>
        <end position="85"/>
    </location>
    <ligand>
        <name>substrate</name>
    </ligand>
</feature>
<feature type="binding site" evidence="1">
    <location>
        <begin position="151"/>
        <end position="152"/>
    </location>
    <ligand>
        <name>substrate</name>
    </ligand>
</feature>
<feature type="site" description="Transition state stabilizer" evidence="1">
    <location>
        <position position="150"/>
    </location>
</feature>
<sequence>MLQVYLVRHGESEWNAARRIQGQSDSPLTETGEHQARLVAQRVKSESITHIITSDLGRTRRTAEIIAKVCGCEIILEPRLRELHMGVLERRNIDSLTSEEEKWRKKVLDGTPGGRIPKGESMDELAVRMRAALENCRNLPVGSRPLLVSHGIALGCLVGTILGLPAHAERRLRLRNCSLSRVDYQHSPWLASGWIVETAGDITHLDTPALDELQR</sequence>
<evidence type="ECO:0000255" key="1">
    <source>
        <dbReference type="HAMAP-Rule" id="MF_01040"/>
    </source>
</evidence>
<organism>
    <name type="scientific">Photorhabdus laumondii subsp. laumondii (strain DSM 15139 / CIP 105565 / TT01)</name>
    <name type="common">Photorhabdus luminescens subsp. laumondii</name>
    <dbReference type="NCBI Taxonomy" id="243265"/>
    <lineage>
        <taxon>Bacteria</taxon>
        <taxon>Pseudomonadati</taxon>
        <taxon>Pseudomonadota</taxon>
        <taxon>Gammaproteobacteria</taxon>
        <taxon>Enterobacterales</taxon>
        <taxon>Morganellaceae</taxon>
        <taxon>Photorhabdus</taxon>
    </lineage>
</organism>
<proteinExistence type="inferred from homology"/>
<comment type="catalytic activity">
    <reaction evidence="1">
        <text>(2R)-2-phosphoglycerate = (2R)-3-phosphoglycerate</text>
        <dbReference type="Rhea" id="RHEA:15901"/>
        <dbReference type="ChEBI" id="CHEBI:58272"/>
        <dbReference type="ChEBI" id="CHEBI:58289"/>
    </reaction>
</comment>
<comment type="pathway">
    <text evidence="1">Carbohydrate degradation; glycolysis; pyruvate from D-glyceraldehyde 3-phosphate: step 3/5.</text>
</comment>
<comment type="similarity">
    <text evidence="1">Belongs to the phosphoglycerate mutase family. GpmB subfamily.</text>
</comment>
<protein>
    <recommendedName>
        <fullName evidence="1">Probable phosphoglycerate mutase GpmB</fullName>
        <ecNumber evidence="1">5.4.2.-</ecNumber>
    </recommendedName>
    <alternativeName>
        <fullName evidence="1">PGAM</fullName>
    </alternativeName>
    <alternativeName>
        <fullName evidence="1">Phosphoglyceromutase</fullName>
    </alternativeName>
</protein>
<accession>Q7N900</accession>